<feature type="chain" id="PRO_1000014576" description="Small ribosomal subunit protein bS20">
    <location>
        <begin position="1"/>
        <end position="87"/>
    </location>
</feature>
<feature type="region of interest" description="Disordered" evidence="2">
    <location>
        <begin position="1"/>
        <end position="22"/>
    </location>
</feature>
<keyword id="KW-0687">Ribonucleoprotein</keyword>
<keyword id="KW-0689">Ribosomal protein</keyword>
<keyword id="KW-0694">RNA-binding</keyword>
<keyword id="KW-0699">rRNA-binding</keyword>
<evidence type="ECO:0000255" key="1">
    <source>
        <dbReference type="HAMAP-Rule" id="MF_00500"/>
    </source>
</evidence>
<evidence type="ECO:0000256" key="2">
    <source>
        <dbReference type="SAM" id="MobiDB-lite"/>
    </source>
</evidence>
<evidence type="ECO:0000305" key="3"/>
<comment type="function">
    <text evidence="1">Binds directly to 16S ribosomal RNA.</text>
</comment>
<comment type="similarity">
    <text evidence="1">Belongs to the bacterial ribosomal protein bS20 family.</text>
</comment>
<dbReference type="EMBL" id="AP009044">
    <property type="protein sequence ID" value="BAF55230.1"/>
    <property type="molecule type" value="Genomic_DNA"/>
</dbReference>
<dbReference type="RefSeq" id="WP_003859343.1">
    <property type="nucleotide sequence ID" value="NC_009342.1"/>
</dbReference>
<dbReference type="SMR" id="A4QG64"/>
<dbReference type="GeneID" id="1020294"/>
<dbReference type="KEGG" id="cgt:cgR_2226"/>
<dbReference type="HOGENOM" id="CLU_160655_0_1_11"/>
<dbReference type="PhylomeDB" id="A4QG64"/>
<dbReference type="Proteomes" id="UP000006698">
    <property type="component" value="Chromosome"/>
</dbReference>
<dbReference type="GO" id="GO:0005829">
    <property type="term" value="C:cytosol"/>
    <property type="evidence" value="ECO:0007669"/>
    <property type="project" value="TreeGrafter"/>
</dbReference>
<dbReference type="GO" id="GO:0015935">
    <property type="term" value="C:small ribosomal subunit"/>
    <property type="evidence" value="ECO:0007669"/>
    <property type="project" value="TreeGrafter"/>
</dbReference>
<dbReference type="GO" id="GO:0070181">
    <property type="term" value="F:small ribosomal subunit rRNA binding"/>
    <property type="evidence" value="ECO:0007669"/>
    <property type="project" value="TreeGrafter"/>
</dbReference>
<dbReference type="GO" id="GO:0003735">
    <property type="term" value="F:structural constituent of ribosome"/>
    <property type="evidence" value="ECO:0007669"/>
    <property type="project" value="InterPro"/>
</dbReference>
<dbReference type="GO" id="GO:0006412">
    <property type="term" value="P:translation"/>
    <property type="evidence" value="ECO:0007669"/>
    <property type="project" value="UniProtKB-UniRule"/>
</dbReference>
<dbReference type="FunFam" id="1.20.58.110:FF:000001">
    <property type="entry name" value="30S ribosomal protein S20"/>
    <property type="match status" value="1"/>
</dbReference>
<dbReference type="Gene3D" id="1.20.58.110">
    <property type="entry name" value="Ribosomal protein S20"/>
    <property type="match status" value="1"/>
</dbReference>
<dbReference type="HAMAP" id="MF_00500">
    <property type="entry name" value="Ribosomal_bS20"/>
    <property type="match status" value="1"/>
</dbReference>
<dbReference type="InterPro" id="IPR002583">
    <property type="entry name" value="Ribosomal_bS20"/>
</dbReference>
<dbReference type="InterPro" id="IPR036510">
    <property type="entry name" value="Ribosomal_bS20_sf"/>
</dbReference>
<dbReference type="NCBIfam" id="TIGR00029">
    <property type="entry name" value="S20"/>
    <property type="match status" value="1"/>
</dbReference>
<dbReference type="PANTHER" id="PTHR33398">
    <property type="entry name" value="30S RIBOSOMAL PROTEIN S20"/>
    <property type="match status" value="1"/>
</dbReference>
<dbReference type="PANTHER" id="PTHR33398:SF1">
    <property type="entry name" value="SMALL RIBOSOMAL SUBUNIT PROTEIN BS20C"/>
    <property type="match status" value="1"/>
</dbReference>
<dbReference type="Pfam" id="PF01649">
    <property type="entry name" value="Ribosomal_S20p"/>
    <property type="match status" value="1"/>
</dbReference>
<dbReference type="SUPFAM" id="SSF46992">
    <property type="entry name" value="Ribosomal protein S20"/>
    <property type="match status" value="1"/>
</dbReference>
<organism>
    <name type="scientific">Corynebacterium glutamicum (strain R)</name>
    <dbReference type="NCBI Taxonomy" id="340322"/>
    <lineage>
        <taxon>Bacteria</taxon>
        <taxon>Bacillati</taxon>
        <taxon>Actinomycetota</taxon>
        <taxon>Actinomycetes</taxon>
        <taxon>Mycobacteriales</taxon>
        <taxon>Corynebacteriaceae</taxon>
        <taxon>Corynebacterium</taxon>
    </lineage>
</organism>
<accession>A4QG64</accession>
<gene>
    <name evidence="1" type="primary">rpsT</name>
    <name type="ordered locus">cgR_2226</name>
</gene>
<reference key="1">
    <citation type="journal article" date="2007" name="Microbiology">
        <title>Comparative analysis of the Corynebacterium glutamicum group and complete genome sequence of strain R.</title>
        <authorList>
            <person name="Yukawa H."/>
            <person name="Omumasaba C.A."/>
            <person name="Nonaka H."/>
            <person name="Kos P."/>
            <person name="Okai N."/>
            <person name="Suzuki N."/>
            <person name="Suda M."/>
            <person name="Tsuge Y."/>
            <person name="Watanabe J."/>
            <person name="Ikeda Y."/>
            <person name="Vertes A.A."/>
            <person name="Inui M."/>
        </authorList>
    </citation>
    <scope>NUCLEOTIDE SEQUENCE [LARGE SCALE GENOMIC DNA]</scope>
    <source>
        <strain>R</strain>
    </source>
</reference>
<proteinExistence type="inferred from homology"/>
<sequence length="87" mass="9553">MANIKSQIKRNKTNEKARLRNQAVRSAVRTEIRKFNAAIEAGDKDAAQAQLRTASRALDKAVTKGVFHINNAANKKSNMATAFNKLG</sequence>
<name>RS20_CORGB</name>
<protein>
    <recommendedName>
        <fullName evidence="1">Small ribosomal subunit protein bS20</fullName>
    </recommendedName>
    <alternativeName>
        <fullName evidence="3">30S ribosomal protein S20</fullName>
    </alternativeName>
</protein>